<comment type="catalytic activity">
    <reaction evidence="1">
        <text>adenine + H2O + H(+) = hypoxanthine + NH4(+)</text>
        <dbReference type="Rhea" id="RHEA:23688"/>
        <dbReference type="ChEBI" id="CHEBI:15377"/>
        <dbReference type="ChEBI" id="CHEBI:15378"/>
        <dbReference type="ChEBI" id="CHEBI:16708"/>
        <dbReference type="ChEBI" id="CHEBI:17368"/>
        <dbReference type="ChEBI" id="CHEBI:28938"/>
        <dbReference type="EC" id="3.5.4.2"/>
    </reaction>
</comment>
<comment type="cofactor">
    <cofactor evidence="1">
        <name>Mn(2+)</name>
        <dbReference type="ChEBI" id="CHEBI:29035"/>
    </cofactor>
</comment>
<comment type="similarity">
    <text evidence="1">Belongs to the metallo-dependent hydrolases superfamily. Adenine deaminase family.</text>
</comment>
<feature type="chain" id="PRO_1000068613" description="Adenine deaminase">
    <location>
        <begin position="1"/>
        <end position="533"/>
    </location>
</feature>
<proteinExistence type="inferred from homology"/>
<evidence type="ECO:0000255" key="1">
    <source>
        <dbReference type="HAMAP-Rule" id="MF_01518"/>
    </source>
</evidence>
<name>ADEC_SULNB</name>
<dbReference type="EC" id="3.5.4.2" evidence="1"/>
<dbReference type="EMBL" id="AP009179">
    <property type="protein sequence ID" value="BAF71814.1"/>
    <property type="molecule type" value="Genomic_DNA"/>
</dbReference>
<dbReference type="RefSeq" id="WP_011980547.1">
    <property type="nucleotide sequence ID" value="NC_009663.1"/>
</dbReference>
<dbReference type="SMR" id="A6Q8K5"/>
<dbReference type="STRING" id="387093.SUN_0856"/>
<dbReference type="KEGG" id="sun:SUN_0856"/>
<dbReference type="eggNOG" id="COG1001">
    <property type="taxonomic scope" value="Bacteria"/>
</dbReference>
<dbReference type="HOGENOM" id="CLU_027935_0_0_7"/>
<dbReference type="OrthoDB" id="9775607at2"/>
<dbReference type="Proteomes" id="UP000006378">
    <property type="component" value="Chromosome"/>
</dbReference>
<dbReference type="GO" id="GO:0000034">
    <property type="term" value="F:adenine deaminase activity"/>
    <property type="evidence" value="ECO:0007669"/>
    <property type="project" value="UniProtKB-UniRule"/>
</dbReference>
<dbReference type="GO" id="GO:0006146">
    <property type="term" value="P:adenine catabolic process"/>
    <property type="evidence" value="ECO:0007669"/>
    <property type="project" value="InterPro"/>
</dbReference>
<dbReference type="CDD" id="cd01295">
    <property type="entry name" value="AdeC"/>
    <property type="match status" value="1"/>
</dbReference>
<dbReference type="Gene3D" id="3.20.20.140">
    <property type="entry name" value="Metal-dependent hydrolases"/>
    <property type="match status" value="1"/>
</dbReference>
<dbReference type="Gene3D" id="2.30.40.10">
    <property type="entry name" value="Urease, subunit C, domain 1"/>
    <property type="match status" value="1"/>
</dbReference>
<dbReference type="HAMAP" id="MF_01518">
    <property type="entry name" value="Adenine_deamin"/>
    <property type="match status" value="1"/>
</dbReference>
<dbReference type="InterPro" id="IPR006679">
    <property type="entry name" value="Adenine_deam"/>
</dbReference>
<dbReference type="InterPro" id="IPR026912">
    <property type="entry name" value="Adenine_deam_C"/>
</dbReference>
<dbReference type="InterPro" id="IPR006680">
    <property type="entry name" value="Amidohydro-rel"/>
</dbReference>
<dbReference type="InterPro" id="IPR011059">
    <property type="entry name" value="Metal-dep_hydrolase_composite"/>
</dbReference>
<dbReference type="InterPro" id="IPR032466">
    <property type="entry name" value="Metal_Hydrolase"/>
</dbReference>
<dbReference type="NCBIfam" id="TIGR01178">
    <property type="entry name" value="ade"/>
    <property type="match status" value="1"/>
</dbReference>
<dbReference type="PANTHER" id="PTHR11113:SF2">
    <property type="entry name" value="ADENINE DEAMINASE"/>
    <property type="match status" value="1"/>
</dbReference>
<dbReference type="PANTHER" id="PTHR11113">
    <property type="entry name" value="N-ACETYLGLUCOSAMINE-6-PHOSPHATE DEACETYLASE"/>
    <property type="match status" value="1"/>
</dbReference>
<dbReference type="Pfam" id="PF13382">
    <property type="entry name" value="Adenine_deam_C"/>
    <property type="match status" value="1"/>
</dbReference>
<dbReference type="Pfam" id="PF01979">
    <property type="entry name" value="Amidohydro_1"/>
    <property type="match status" value="1"/>
</dbReference>
<dbReference type="SUPFAM" id="SSF51338">
    <property type="entry name" value="Composite domain of metallo-dependent hydrolases"/>
    <property type="match status" value="1"/>
</dbReference>
<dbReference type="SUPFAM" id="SSF51556">
    <property type="entry name" value="Metallo-dependent hydrolases"/>
    <property type="match status" value="1"/>
</dbReference>
<protein>
    <recommendedName>
        <fullName evidence="1">Adenine deaminase</fullName>
        <shortName evidence="1">Adenase</shortName>
        <shortName evidence="1">Adenine aminase</shortName>
        <ecNumber evidence="1">3.5.4.2</ecNumber>
    </recommendedName>
</protein>
<reference key="1">
    <citation type="journal article" date="2007" name="Proc. Natl. Acad. Sci. U.S.A.">
        <title>Deep-sea vent epsilon-proteobacterial genomes provide insights into emergence of pathogens.</title>
        <authorList>
            <person name="Nakagawa S."/>
            <person name="Takaki Y."/>
            <person name="Shimamura S."/>
            <person name="Reysenbach A.-L."/>
            <person name="Takai K."/>
            <person name="Horikoshi K."/>
        </authorList>
    </citation>
    <scope>NUCLEOTIDE SEQUENCE [LARGE SCALE GENOMIC DNA]</scope>
    <source>
        <strain>NBC37-1</strain>
    </source>
</reference>
<organism>
    <name type="scientific">Sulfurovum sp. (strain NBC37-1)</name>
    <dbReference type="NCBI Taxonomy" id="387093"/>
    <lineage>
        <taxon>Bacteria</taxon>
        <taxon>Pseudomonadati</taxon>
        <taxon>Campylobacterota</taxon>
        <taxon>Epsilonproteobacteria</taxon>
        <taxon>Campylobacterales</taxon>
        <taxon>Sulfurovaceae</taxon>
        <taxon>Sulfurovum</taxon>
    </lineage>
</organism>
<keyword id="KW-0378">Hydrolase</keyword>
<keyword id="KW-0464">Manganese</keyword>
<gene>
    <name evidence="1" type="primary">ade</name>
    <name type="ordered locus">SUN_0856</name>
</gene>
<sequence>MEMKSNYVDIFKREIFPAKVRVEKGKIASIERIDTPCDTYILPGFVDAHIHIESSMLPPSEFARLAVCHGTVATVSDPHEIANVLGIPGVGYMLDNSEMTPFKFYFGASPCVPATTFETSGATLGPDEIESLLKMPQIKYLSEVMNFPGVINGDPDMLAKIAKAKALHKRIDGHAPGLRGDELTKYIEAGIETDHEAFTYEEGLEKLQKGMKILIREGSAAKNFEALAPLIPAYPNKLMFCSDDRHPNDLAREHIDGHVRRAIAKGYDLFDVLRIASVNPVEHYGLEVGLLRVGDPADFIVVEDLKDFKVLQTVIDGEIVARGKKPLIDSVTVETPNHFHTGIKKEEDFILERCVHTEIIHALDHSLITEEEIMDLSSGKAKDVLKITVVNRYEDVKPAVAYVHGFGLKKGAIASSVAHDSHNIIAVGCSDALIAKAVNTIIGNRGGICAVTEEEIEVLSLPIAGLMSDKDGFEVANRYADLDRMVREYFTSLLSAPFMTLSFMALLVIPELKLSDKGLFDGRSFHFIDSCRR</sequence>
<accession>A6Q8K5</accession>